<protein>
    <recommendedName>
        <fullName>Ribonucleoside-diphosphate reductase large subunit</fullName>
        <ecNumber>1.17.4.1</ecNumber>
    </recommendedName>
    <alternativeName>
        <fullName>Ribonucleoside-diphosphate reductase subunit M1</fullName>
    </alternativeName>
    <alternativeName>
        <fullName>Ribonucleotide reductase large subunit</fullName>
    </alternativeName>
    <alternativeName>
        <fullName>Ribonucleotide reductase protein R1 class I</fullName>
    </alternativeName>
</protein>
<comment type="function">
    <text>Provides the precursors necessary for DNA synthesis. Catalyzes the biosynthesis of deoxyribonucleotides from the corresponding ribonucleotides.</text>
</comment>
<comment type="catalytic activity">
    <reaction>
        <text>a 2'-deoxyribonucleoside 5'-diphosphate + [thioredoxin]-disulfide + H2O = a ribonucleoside 5'-diphosphate + [thioredoxin]-dithiol</text>
        <dbReference type="Rhea" id="RHEA:23252"/>
        <dbReference type="Rhea" id="RHEA-COMP:10698"/>
        <dbReference type="Rhea" id="RHEA-COMP:10700"/>
        <dbReference type="ChEBI" id="CHEBI:15377"/>
        <dbReference type="ChEBI" id="CHEBI:29950"/>
        <dbReference type="ChEBI" id="CHEBI:50058"/>
        <dbReference type="ChEBI" id="CHEBI:57930"/>
        <dbReference type="ChEBI" id="CHEBI:73316"/>
        <dbReference type="EC" id="1.17.4.1"/>
    </reaction>
</comment>
<comment type="activity regulation">
    <text evidence="1">Under complex allosteric control mediated by deoxynucleoside triphosphates and ATP binding to separate specificity and activation sites on the M1 subunit. The type of nucleotide bound at the specificity site determines substrate preference. It seems probable that ATP makes the enzyme reduce CDP and UDP, dGTP favors ADP reduction and dTTP favors GDP reduction. Stimulated by ATP and inhibited by dATP binding to the activity site (By similarity).</text>
</comment>
<comment type="subunit">
    <text>Heterodimer of a large and a small subunit.</text>
</comment>
<comment type="subcellular location">
    <subcellularLocation>
        <location>Cytoplasm</location>
    </subcellularLocation>
</comment>
<comment type="similarity">
    <text evidence="4">Belongs to the ribonucleoside diphosphate reductase large chain family.</text>
</comment>
<sequence length="794" mass="89816">MHVIKRDGGQEGVMFDKITSRIQKLCYGLNSDFVDPTQITMKVIQGLYSGVTTVELDTLAAETAATSTTKHPDYAILAARIAVSNLHKETKKVFSEVMEDLYNYVNPLNSRHSPMISKETLDIVLANKDRLNSAIIYDRDFSYNFFGFKTLERSYLLKINGKVAERPQHMLMRVSVGIHKEDIAAAIETYNLLSEKWFTHASPTLFNAGTNRPQLSSCFLLAMKDDSIEGIYDTLKQCALISKSAGGIGVAVSCIRATGRYIAGTNGNSNGLVPMLRVNNNTARYVDQGGNKRPGAFAMYLEPWHFDIFDFLELKKNTGKEEQRARDLFYALWIPDLFMKRVETNGDWSLMCPNDCPGLDECWGEEFEKLYAKYEQEGRAKRVVKAQQLWYAIIESQTETGTPYMLYKDACNRKSNRQNLGTIKCSNLCTEIVEYTSADEVAVCNLASIALNMYVTSERTFDFQKLASVTKVIVKNLNKIIDINYYPVKEAENSNKRHRPIGIGVQGLADAFILMRFPFESTEAQLLNTQIFETIYYAALESSCELAAEYGPYQTYAGCPVSKGILQYDMWEKTPTDLWDWAALKEKIANDGVRNSLLLAPMPTASTAQILGNNESIEPYTSNIYHRRVLSGEFQIVNPHLLKDLTERGLWNEEMKNQIIAQNGSIQTIPAIPDDLKELYKTVWEISQKTILKMAADRGAYIDQSQSLNIHIAEPNYGKLTSMHFYGWKQGLKTGMYYLRTKPGANPIQFTLNKEKLKETQKTTSSEDEETKERNKAAMVCSLENRHECLMCGS</sequence>
<reference key="1">
    <citation type="journal article" date="1996" name="Mol. Mar. Biol. Biotechnol.">
        <title>Cloning and sequencing of cDNAs encoding ribonucleotide reductase from zebrafish Danio rerio.</title>
        <authorList>
            <person name="Mathews C.Z."/>
            <person name="Sjoeberg B.-M."/>
            <person name="Karlsson M."/>
        </authorList>
    </citation>
    <scope>NUCLEOTIDE SEQUENCE [MRNA]</scope>
</reference>
<name>RIR1_DANRE</name>
<feature type="chain" id="PRO_0000187192" description="Ribonucleoside-diphosphate reductase large subunit">
    <location>
        <begin position="1"/>
        <end position="794"/>
    </location>
</feature>
<feature type="domain" description="ATP-cone" evidence="3">
    <location>
        <begin position="1"/>
        <end position="92"/>
    </location>
</feature>
<feature type="active site" description="Proton acceptor" evidence="1">
    <location>
        <position position="427"/>
    </location>
</feature>
<feature type="active site" description="Cysteine radical intermediate" evidence="1">
    <location>
        <position position="429"/>
    </location>
</feature>
<feature type="active site" description="Proton acceptor" evidence="1">
    <location>
        <position position="431"/>
    </location>
</feature>
<feature type="binding site" evidence="2">
    <location>
        <begin position="5"/>
        <end position="6"/>
    </location>
    <ligand>
        <name>ATP</name>
        <dbReference type="ChEBI" id="CHEBI:30616"/>
        <note>allosteric activator</note>
    </ligand>
</feature>
<feature type="binding site" evidence="2">
    <location>
        <begin position="11"/>
        <end position="17"/>
    </location>
    <ligand>
        <name>ATP</name>
        <dbReference type="ChEBI" id="CHEBI:30616"/>
        <note>allosteric activator</note>
    </ligand>
</feature>
<feature type="binding site" evidence="2">
    <location>
        <position position="53"/>
    </location>
    <ligand>
        <name>ATP</name>
        <dbReference type="ChEBI" id="CHEBI:30616"/>
        <note>allosteric activator</note>
    </ligand>
</feature>
<feature type="binding site" evidence="2">
    <location>
        <position position="57"/>
    </location>
    <ligand>
        <name>ATP</name>
        <dbReference type="ChEBI" id="CHEBI:30616"/>
        <note>allosteric activator</note>
    </ligand>
</feature>
<feature type="binding site" evidence="2">
    <location>
        <position position="202"/>
    </location>
    <ligand>
        <name>GDP</name>
        <dbReference type="ChEBI" id="CHEBI:58189"/>
    </ligand>
</feature>
<feature type="binding site" evidence="2">
    <location>
        <position position="217"/>
    </location>
    <ligand>
        <name>GDP</name>
        <dbReference type="ChEBI" id="CHEBI:58189"/>
    </ligand>
</feature>
<feature type="binding site" evidence="2">
    <location>
        <begin position="226"/>
        <end position="228"/>
    </location>
    <ligand>
        <name>dTTP</name>
        <dbReference type="ChEBI" id="CHEBI:37568"/>
        <note>allosteric effector that controls substrate specificity</note>
    </ligand>
</feature>
<feature type="binding site" evidence="2">
    <location>
        <position position="243"/>
    </location>
    <ligand>
        <name>dTTP</name>
        <dbReference type="ChEBI" id="CHEBI:37568"/>
        <note>allosteric effector that controls substrate specificity</note>
    </ligand>
</feature>
<feature type="binding site" evidence="2">
    <location>
        <position position="256"/>
    </location>
    <ligand>
        <name>dTTP</name>
        <dbReference type="ChEBI" id="CHEBI:37568"/>
        <note>allosteric effector that controls substrate specificity</note>
    </ligand>
</feature>
<feature type="binding site" evidence="2">
    <location>
        <begin position="263"/>
        <end position="264"/>
    </location>
    <ligand>
        <name>dTTP</name>
        <dbReference type="ChEBI" id="CHEBI:37568"/>
        <note>allosteric effector that controls substrate specificity</note>
    </ligand>
</feature>
<feature type="binding site" evidence="2">
    <location>
        <position position="427"/>
    </location>
    <ligand>
        <name>GDP</name>
        <dbReference type="ChEBI" id="CHEBI:58189"/>
    </ligand>
</feature>
<feature type="binding site" evidence="2">
    <location>
        <position position="431"/>
    </location>
    <ligand>
        <name>GDP</name>
        <dbReference type="ChEBI" id="CHEBI:58189"/>
    </ligand>
</feature>
<feature type="binding site" evidence="2">
    <location>
        <begin position="604"/>
        <end position="607"/>
    </location>
    <ligand>
        <name>GDP</name>
        <dbReference type="ChEBI" id="CHEBI:58189"/>
    </ligand>
</feature>
<feature type="site" description="Important for hydrogen atom transfer" evidence="1">
    <location>
        <position position="218"/>
    </location>
</feature>
<feature type="site" description="Important for hydrogen atom transfer" evidence="1">
    <location>
        <position position="444"/>
    </location>
</feature>
<feature type="site" description="Important for electron transfer" evidence="1">
    <location>
        <position position="737"/>
    </location>
</feature>
<feature type="site" description="Important for electron transfer" evidence="1">
    <location>
        <position position="738"/>
    </location>
</feature>
<feature type="site" description="Interacts with thioredoxin/glutaredoxin" evidence="1">
    <location>
        <position position="789"/>
    </location>
</feature>
<feature type="site" description="Interacts with thioredoxin/glutaredoxin" evidence="1">
    <location>
        <position position="792"/>
    </location>
</feature>
<feature type="disulfide bond" description="Redox-active" evidence="1">
    <location>
        <begin position="218"/>
        <end position="444"/>
    </location>
</feature>
<organism>
    <name type="scientific">Danio rerio</name>
    <name type="common">Zebrafish</name>
    <name type="synonym">Brachydanio rerio</name>
    <dbReference type="NCBI Taxonomy" id="7955"/>
    <lineage>
        <taxon>Eukaryota</taxon>
        <taxon>Metazoa</taxon>
        <taxon>Chordata</taxon>
        <taxon>Craniata</taxon>
        <taxon>Vertebrata</taxon>
        <taxon>Euteleostomi</taxon>
        <taxon>Actinopterygii</taxon>
        <taxon>Neopterygii</taxon>
        <taxon>Teleostei</taxon>
        <taxon>Ostariophysi</taxon>
        <taxon>Cypriniformes</taxon>
        <taxon>Danionidae</taxon>
        <taxon>Danioninae</taxon>
        <taxon>Danio</taxon>
    </lineage>
</organism>
<evidence type="ECO:0000250" key="1"/>
<evidence type="ECO:0000250" key="2">
    <source>
        <dbReference type="UniProtKB" id="P23921"/>
    </source>
</evidence>
<evidence type="ECO:0000255" key="3">
    <source>
        <dbReference type="PROSITE-ProRule" id="PRU00492"/>
    </source>
</evidence>
<evidence type="ECO:0000305" key="4"/>
<gene>
    <name type="primary">rrm1</name>
</gene>
<dbReference type="EC" id="1.17.4.1"/>
<dbReference type="EMBL" id="U57964">
    <property type="protein sequence ID" value="AAB37102.1"/>
    <property type="molecule type" value="mRNA"/>
</dbReference>
<dbReference type="SMR" id="P79732"/>
<dbReference type="FunCoup" id="P79732">
    <property type="interactions" value="1111"/>
</dbReference>
<dbReference type="STRING" id="7955.ENSDARP00000010800"/>
<dbReference type="PaxDb" id="7955-ENSDARP00000010800"/>
<dbReference type="AGR" id="ZFIN:ZDB-GENE-990415-247"/>
<dbReference type="ZFIN" id="ZDB-GENE-990415-247">
    <property type="gene designation" value="rrm1"/>
</dbReference>
<dbReference type="eggNOG" id="KOG1112">
    <property type="taxonomic scope" value="Eukaryota"/>
</dbReference>
<dbReference type="InParanoid" id="P79732"/>
<dbReference type="PhylomeDB" id="P79732"/>
<dbReference type="Reactome" id="R-DRE-499943">
    <property type="pathway name" value="Interconversion of nucleotide di- and triphosphates"/>
</dbReference>
<dbReference type="PRO" id="PR:P79732"/>
<dbReference type="Proteomes" id="UP000000437">
    <property type="component" value="Unplaced"/>
</dbReference>
<dbReference type="GO" id="GO:0005971">
    <property type="term" value="C:ribonucleoside-diphosphate reductase complex"/>
    <property type="evidence" value="ECO:0000318"/>
    <property type="project" value="GO_Central"/>
</dbReference>
<dbReference type="GO" id="GO:0005524">
    <property type="term" value="F:ATP binding"/>
    <property type="evidence" value="ECO:0000318"/>
    <property type="project" value="GO_Central"/>
</dbReference>
<dbReference type="GO" id="GO:0004748">
    <property type="term" value="F:ribonucleoside-diphosphate reductase activity, thioredoxin disulfide as acceptor"/>
    <property type="evidence" value="ECO:0000250"/>
    <property type="project" value="UniProtKB"/>
</dbReference>
<dbReference type="GO" id="GO:0009263">
    <property type="term" value="P:deoxyribonucleotide biosynthetic process"/>
    <property type="evidence" value="ECO:0000250"/>
    <property type="project" value="UniProtKB"/>
</dbReference>
<dbReference type="CDD" id="cd01679">
    <property type="entry name" value="RNR_I"/>
    <property type="match status" value="1"/>
</dbReference>
<dbReference type="FunFam" id="3.20.70.20:FF:000001">
    <property type="entry name" value="Ribonucleoside-diphosphate reductase"/>
    <property type="match status" value="1"/>
</dbReference>
<dbReference type="Gene3D" id="3.20.70.20">
    <property type="match status" value="1"/>
</dbReference>
<dbReference type="InterPro" id="IPR005144">
    <property type="entry name" value="ATP-cone_dom"/>
</dbReference>
<dbReference type="InterPro" id="IPR013346">
    <property type="entry name" value="NrdE_NrdA_C"/>
</dbReference>
<dbReference type="InterPro" id="IPR000788">
    <property type="entry name" value="RNR_lg_C"/>
</dbReference>
<dbReference type="InterPro" id="IPR013509">
    <property type="entry name" value="RNR_lsu_N"/>
</dbReference>
<dbReference type="InterPro" id="IPR008926">
    <property type="entry name" value="RNR_R1-su_N"/>
</dbReference>
<dbReference type="InterPro" id="IPR039718">
    <property type="entry name" value="Rrm1"/>
</dbReference>
<dbReference type="NCBIfam" id="TIGR02506">
    <property type="entry name" value="NrdE_NrdA"/>
    <property type="match status" value="1"/>
</dbReference>
<dbReference type="PANTHER" id="PTHR11573">
    <property type="entry name" value="RIBONUCLEOSIDE-DIPHOSPHATE REDUCTASE LARGE CHAIN"/>
    <property type="match status" value="1"/>
</dbReference>
<dbReference type="PANTHER" id="PTHR11573:SF6">
    <property type="entry name" value="RIBONUCLEOSIDE-DIPHOSPHATE REDUCTASE LARGE SUBUNIT"/>
    <property type="match status" value="1"/>
</dbReference>
<dbReference type="Pfam" id="PF03477">
    <property type="entry name" value="ATP-cone"/>
    <property type="match status" value="1"/>
</dbReference>
<dbReference type="Pfam" id="PF02867">
    <property type="entry name" value="Ribonuc_red_lgC"/>
    <property type="match status" value="1"/>
</dbReference>
<dbReference type="Pfam" id="PF00317">
    <property type="entry name" value="Ribonuc_red_lgN"/>
    <property type="match status" value="1"/>
</dbReference>
<dbReference type="PRINTS" id="PR01183">
    <property type="entry name" value="RIBORDTASEM1"/>
</dbReference>
<dbReference type="SUPFAM" id="SSF51998">
    <property type="entry name" value="PFL-like glycyl radical enzymes"/>
    <property type="match status" value="1"/>
</dbReference>
<dbReference type="SUPFAM" id="SSF48168">
    <property type="entry name" value="R1 subunit of ribonucleotide reductase, N-terminal domain"/>
    <property type="match status" value="1"/>
</dbReference>
<dbReference type="PROSITE" id="PS51161">
    <property type="entry name" value="ATP_CONE"/>
    <property type="match status" value="1"/>
</dbReference>
<dbReference type="PROSITE" id="PS00089">
    <property type="entry name" value="RIBORED_LARGE"/>
    <property type="match status" value="1"/>
</dbReference>
<accession>P79732</accession>
<proteinExistence type="evidence at transcript level"/>
<keyword id="KW-0021">Allosteric enzyme</keyword>
<keyword id="KW-0067">ATP-binding</keyword>
<keyword id="KW-0963">Cytoplasm</keyword>
<keyword id="KW-0215">Deoxyribonucleotide synthesis</keyword>
<keyword id="KW-1015">Disulfide bond</keyword>
<keyword id="KW-0547">Nucleotide-binding</keyword>
<keyword id="KW-0560">Oxidoreductase</keyword>
<keyword id="KW-1185">Reference proteome</keyword>